<feature type="chain" id="PRO_1000198238" description="UPF0297 protein LCK_00468">
    <location>
        <begin position="1"/>
        <end position="83"/>
    </location>
</feature>
<name>Y468_LEUCK</name>
<protein>
    <recommendedName>
        <fullName evidence="1">UPF0297 protein LCK_00468</fullName>
    </recommendedName>
</protein>
<reference key="1">
    <citation type="journal article" date="2008" name="J. Bacteriol.">
        <title>Complete genome sequence of Leuconostoc citreum KM20.</title>
        <authorList>
            <person name="Kim J.F."/>
            <person name="Jeong H."/>
            <person name="Lee J.-S."/>
            <person name="Choi S.-H."/>
            <person name="Ha M."/>
            <person name="Hur C.-G."/>
            <person name="Kim J.-S."/>
            <person name="Lee S."/>
            <person name="Park H.-S."/>
            <person name="Park Y.-H."/>
            <person name="Oh T.K."/>
        </authorList>
    </citation>
    <scope>NUCLEOTIDE SEQUENCE [LARGE SCALE GENOMIC DNA]</scope>
    <source>
        <strain>KM20</strain>
    </source>
</reference>
<gene>
    <name type="ordered locus">LCK_00468</name>
</gene>
<evidence type="ECO:0000255" key="1">
    <source>
        <dbReference type="HAMAP-Rule" id="MF_01507"/>
    </source>
</evidence>
<sequence>MSVGDETTIFDFGNQMPKDIHDTLEIVYNALEEKGYNPINQIVGYLMSGDPAYIPRLNDARNLIKRHERDEIIEELVRVYLKK</sequence>
<proteinExistence type="inferred from homology"/>
<keyword id="KW-1185">Reference proteome</keyword>
<comment type="similarity">
    <text evidence="1">Belongs to the UPF0297 family.</text>
</comment>
<organism>
    <name type="scientific">Leuconostoc citreum (strain KM20)</name>
    <dbReference type="NCBI Taxonomy" id="349519"/>
    <lineage>
        <taxon>Bacteria</taxon>
        <taxon>Bacillati</taxon>
        <taxon>Bacillota</taxon>
        <taxon>Bacilli</taxon>
        <taxon>Lactobacillales</taxon>
        <taxon>Lactobacillaceae</taxon>
        <taxon>Leuconostoc</taxon>
    </lineage>
</organism>
<dbReference type="EMBL" id="DQ489736">
    <property type="protein sequence ID" value="ACA82301.1"/>
    <property type="molecule type" value="Genomic_DNA"/>
</dbReference>
<dbReference type="RefSeq" id="WP_004903140.1">
    <property type="nucleotide sequence ID" value="NC_010471.1"/>
</dbReference>
<dbReference type="SMR" id="B1MXP9"/>
<dbReference type="STRING" id="349519.LCK_00468"/>
<dbReference type="KEGG" id="lci:LCK_00468"/>
<dbReference type="eggNOG" id="COG4472">
    <property type="taxonomic scope" value="Bacteria"/>
</dbReference>
<dbReference type="HOGENOM" id="CLU_162466_0_0_9"/>
<dbReference type="OrthoDB" id="9796303at2"/>
<dbReference type="Proteomes" id="UP000002166">
    <property type="component" value="Chromosome"/>
</dbReference>
<dbReference type="HAMAP" id="MF_01507">
    <property type="entry name" value="UPF0297"/>
    <property type="match status" value="1"/>
</dbReference>
<dbReference type="InterPro" id="IPR009309">
    <property type="entry name" value="IreB"/>
</dbReference>
<dbReference type="NCBIfam" id="NF003997">
    <property type="entry name" value="PRK05473.1"/>
    <property type="match status" value="1"/>
</dbReference>
<dbReference type="PANTHER" id="PTHR40067">
    <property type="entry name" value="UPF0297 PROTEIN YRZL"/>
    <property type="match status" value="1"/>
</dbReference>
<dbReference type="PANTHER" id="PTHR40067:SF1">
    <property type="entry name" value="UPF0297 PROTEIN YRZL"/>
    <property type="match status" value="1"/>
</dbReference>
<dbReference type="Pfam" id="PF06135">
    <property type="entry name" value="IreB"/>
    <property type="match status" value="1"/>
</dbReference>
<dbReference type="PIRSF" id="PIRSF037258">
    <property type="entry name" value="DUF965_bac"/>
    <property type="match status" value="1"/>
</dbReference>
<accession>B1MXP9</accession>